<gene>
    <name type="primary">PGA</name>
</gene>
<protein>
    <recommendedName>
        <fullName>Pepsin A</fullName>
        <ecNumber>3.4.23.1</ecNumber>
    </recommendedName>
</protein>
<accession>P00791</accession>
<accession>Q29080</accession>
<organism>
    <name type="scientific">Sus scrofa</name>
    <name type="common">Pig</name>
    <dbReference type="NCBI Taxonomy" id="9823"/>
    <lineage>
        <taxon>Eukaryota</taxon>
        <taxon>Metazoa</taxon>
        <taxon>Chordata</taxon>
        <taxon>Craniata</taxon>
        <taxon>Vertebrata</taxon>
        <taxon>Euteleostomi</taxon>
        <taxon>Mammalia</taxon>
        <taxon>Eutheria</taxon>
        <taxon>Laurasiatheria</taxon>
        <taxon>Artiodactyla</taxon>
        <taxon>Suina</taxon>
        <taxon>Suidae</taxon>
        <taxon>Sus</taxon>
    </lineage>
</organism>
<reference key="1">
    <citation type="journal article" date="1988" name="Gene">
        <title>Nucleotide sequence and expression in Escherichia coli of cDNA of swine pepsinogen: involvement of the amino-terminal portion of the activation peptide segment in restoration of the functional protein.</title>
        <authorList>
            <person name="Tsukagoshi N."/>
            <person name="Ando Y."/>
            <person name="Tomita Y."/>
            <person name="Uchida R."/>
            <person name="Takemura T."/>
            <person name="Sasaki T."/>
            <person name="Yamagata H."/>
            <person name="Udaka S."/>
            <person name="Ichihara Y."/>
            <person name="Takahashi K."/>
        </authorList>
    </citation>
    <scope>NUCLEOTIDE SEQUENCE [MRNA]</scope>
</reference>
<reference key="2">
    <citation type="journal article" date="1989" name="J. Biol. Chem.">
        <title>Synthesis, purification, and active-site mutagenesis of recombinant porcine pepsinogen.</title>
        <authorList>
            <person name="Lin X.-L."/>
            <person name="Wong R.N.S."/>
            <person name="Tang J."/>
        </authorList>
    </citation>
    <scope>NUCLEOTIDE SEQUENCE [MRNA]</scope>
    <scope>PROTEIN SEQUENCE OF 16-20 AND 60-65</scope>
    <scope>MUTAGENESIS OF ASP-91</scope>
</reference>
<reference key="3">
    <citation type="journal article" date="1974" name="FEBS Lett.">
        <title>Complete amino acid sequence of hog pepsin.</title>
        <authorList>
            <person name="Moravek L."/>
            <person name="Kostka V."/>
        </authorList>
    </citation>
    <scope>PROTEIN SEQUENCE OF 60-385</scope>
    <scope>DISULFIDE BONDS</scope>
</reference>
<reference key="4">
    <citation type="journal article" date="1973" name="Biochem. Biophys. Res. Commun.">
        <title>N-terminal sequence of swine pepsinogen and pepsin. The site of pepsinogen activation.</title>
        <authorList>
            <person name="Stepanov V.M."/>
            <person name="Baratova L.A."/>
            <person name="Pugacheva I.B."/>
            <person name="Belyanova L.P."/>
            <person name="Revina L.P."/>
            <person name="Timokhina E.A."/>
        </authorList>
    </citation>
    <scope>PROTEIN SEQUENCE OF 16-134</scope>
</reference>
<reference key="5">
    <citation type="journal article" date="1968" name="J. Biol. Chem.">
        <title>The amino-terminal sequence of porcine pepsinogen.</title>
        <authorList>
            <person name="Ong E.B."/>
            <person name="Perlmann G.E."/>
        </authorList>
    </citation>
    <scope>PROTEIN SEQUENCE OF 16-56</scope>
</reference>
<reference key="6">
    <citation type="journal article" date="1975" name="J. Biol. Chem.">
        <title>Primary structure of porcine pepsin. III. Amino acid sequence of a cyanogen bromide fragment, CB2A, and the complete structure of porcine pepsin.</title>
        <authorList>
            <person name="Sepulveda P."/>
            <person name="Marciniszyn J.P. Jr."/>
            <person name="Liu D."/>
            <person name="Tang J."/>
        </authorList>
    </citation>
    <scope>PROTEIN SEQUENCE OF 58-347</scope>
</reference>
<reference key="7">
    <citation type="journal article" date="1985" name="J. Biochem.">
        <title>Isolation of human, swine, and rat prepepsinogens and calf preprochymosin, and determination of the primary structures of their NH2-terminal signal sequences.</title>
        <authorList>
            <person name="Ichihara Y."/>
            <person name="Sogawa K."/>
            <person name="Takahashi K."/>
        </authorList>
    </citation>
    <scope>PARTIAL PROTEIN SEQUENCE OF 1-26</scope>
</reference>
<reference key="8">
    <citation type="journal article" date="1969" name="Biochem. J.">
        <title>An aspartic acid residue at the active site of pepsin. The isolation and sequence of the heptapeptide.</title>
        <authorList>
            <person name="Bayliss R.S."/>
            <person name="Knowles J.R."/>
            <person name="Wybrandt G.B."/>
        </authorList>
    </citation>
    <scope>ACTIVE SITE</scope>
</reference>
<reference key="9">
    <citation type="journal article" date="1977" name="Adv. Exp. Med. Biol.">
        <title>X-ray crystallographic studies of pepsin.</title>
        <authorList>
            <person name="Andreeva N.S."/>
            <person name="Gustchina A.E."/>
            <person name="Fedorov A.A."/>
            <person name="Shutzkever N.E."/>
            <person name="Volnova T.V."/>
        </authorList>
    </citation>
    <scope>CRYSTALLIZATION</scope>
</reference>
<reference key="10">
    <citation type="journal article" date="1990" name="J. Mol. Biol.">
        <title>X-ray analyses of aspartic proteinases. II. Three-dimensional structure of the hexagonal crystal form of porcine pepsin at 2.3-A resolution.</title>
        <authorList>
            <person name="Cooper J.B."/>
            <person name="Khan G."/>
            <person name="Taylor G."/>
            <person name="Tickle I.J."/>
            <person name="Blundell T.L."/>
        </authorList>
    </citation>
    <scope>X-RAY CRYSTALLOGRAPHY (2.3 ANGSTROMS)</scope>
</reference>
<reference key="11">
    <citation type="journal article" date="1990" name="Proteins">
        <title>Revised 2.3 A structure of porcine pepsin: evidence for a flexible subdomain.</title>
        <authorList>
            <person name="Abad-Zapatero C."/>
            <person name="Rydel T.J."/>
            <person name="Erickson J."/>
        </authorList>
    </citation>
    <scope>X-RAY CRYSTALLOGRAPHY (2.3 ANGSTROMS)</scope>
</reference>
<reference key="12">
    <citation type="journal article" date="1991" name="J. Mol. Biol.">
        <title>Refined structure of porcine pepsinogen at 1.8-A resolution.</title>
        <authorList>
            <person name="Sielecki A.R."/>
            <person name="Fujinaga M."/>
            <person name="Read R.J."/>
            <person name="James M.N.G."/>
        </authorList>
    </citation>
    <scope>X-RAY CRYSTALLOGRAPHY (1.8 ANGSTROMS)</scope>
</reference>
<reference key="13">
    <citation type="journal article" date="1992" name="Proteins">
        <title>The high-resolution crystal structure of porcine pepsinogen.</title>
        <authorList>
            <person name="Hartsuck J.E."/>
            <person name="Koelsch G."/>
            <person name="Remington S.J."/>
        </authorList>
    </citation>
    <scope>X-RAY CRYSTALLOGRAPHY (1.65 ANGSTROMS)</scope>
</reference>
<proteinExistence type="evidence at protein level"/>
<name>PEPA_PIG</name>
<dbReference type="EC" id="3.4.23.1"/>
<dbReference type="EMBL" id="M20920">
    <property type="protein sequence ID" value="AAA31095.1"/>
    <property type="molecule type" value="mRNA"/>
</dbReference>
<dbReference type="EMBL" id="J04601">
    <property type="protein sequence ID" value="AAA31096.1"/>
    <property type="molecule type" value="mRNA"/>
</dbReference>
<dbReference type="PIR" id="JT0307">
    <property type="entry name" value="PEPG"/>
</dbReference>
<dbReference type="PDB" id="1F34">
    <property type="method" value="X-ray"/>
    <property type="resolution" value="2.45 A"/>
    <property type="chains" value="A=60-385"/>
</dbReference>
<dbReference type="PDB" id="1PSA">
    <property type="method" value="X-ray"/>
    <property type="resolution" value="2.90 A"/>
    <property type="chains" value="A/B=60-385"/>
</dbReference>
<dbReference type="PDB" id="1YX9">
    <property type="method" value="X-ray"/>
    <property type="resolution" value="3.00 A"/>
    <property type="chains" value="A=60-385"/>
</dbReference>
<dbReference type="PDB" id="2PSG">
    <property type="method" value="X-ray"/>
    <property type="resolution" value="1.80 A"/>
    <property type="chains" value="A=16-385"/>
</dbReference>
<dbReference type="PDB" id="3PEP">
    <property type="method" value="X-ray"/>
    <property type="resolution" value="2.30 A"/>
    <property type="chains" value="A=60-385"/>
</dbReference>
<dbReference type="PDB" id="3PSG">
    <property type="method" value="X-ray"/>
    <property type="resolution" value="1.65 A"/>
    <property type="chains" value="A=16-385"/>
</dbReference>
<dbReference type="PDB" id="4PEP">
    <property type="method" value="X-ray"/>
    <property type="resolution" value="1.80 A"/>
    <property type="chains" value="A=60-385"/>
</dbReference>
<dbReference type="PDB" id="5PEP">
    <property type="method" value="X-ray"/>
    <property type="resolution" value="2.34 A"/>
    <property type="chains" value="A=60-385"/>
</dbReference>
<dbReference type="PDB" id="6XCT">
    <property type="method" value="X-ray"/>
    <property type="resolution" value="1.99 A"/>
    <property type="chains" value="A=60-385"/>
</dbReference>
<dbReference type="PDB" id="6XCY">
    <property type="method" value="X-ray"/>
    <property type="resolution" value="2.05 A"/>
    <property type="chains" value="A=60-385"/>
</dbReference>
<dbReference type="PDB" id="6XCZ">
    <property type="method" value="X-ray"/>
    <property type="resolution" value="1.89 A"/>
    <property type="chains" value="A=60-385"/>
</dbReference>
<dbReference type="PDB" id="6XD2">
    <property type="method" value="X-ray"/>
    <property type="resolution" value="1.90 A"/>
    <property type="chains" value="A=60-385"/>
</dbReference>
<dbReference type="PDBsum" id="1F34"/>
<dbReference type="PDBsum" id="1PSA"/>
<dbReference type="PDBsum" id="1YX9"/>
<dbReference type="PDBsum" id="2PSG"/>
<dbReference type="PDBsum" id="3PEP"/>
<dbReference type="PDBsum" id="3PSG"/>
<dbReference type="PDBsum" id="4PEP"/>
<dbReference type="PDBsum" id="5PEP"/>
<dbReference type="PDBsum" id="6XCT"/>
<dbReference type="PDBsum" id="6XCY"/>
<dbReference type="PDBsum" id="6XCZ"/>
<dbReference type="PDBsum" id="6XD2"/>
<dbReference type="BMRB" id="P00791"/>
<dbReference type="PCDDB" id="P00791"/>
<dbReference type="SMR" id="P00791"/>
<dbReference type="FunCoup" id="P00791">
    <property type="interactions" value="76"/>
</dbReference>
<dbReference type="MINT" id="P00791"/>
<dbReference type="STRING" id="9823.ENSSSCP00000013926"/>
<dbReference type="BindingDB" id="P00791"/>
<dbReference type="ChEMBL" id="CHEMBL2714"/>
<dbReference type="Allergome" id="2924">
    <property type="allergen name" value="Sus s Pepsin"/>
</dbReference>
<dbReference type="MEROPS" id="A01.001"/>
<dbReference type="GlyGen" id="P00791">
    <property type="glycosylation" value="1 site"/>
</dbReference>
<dbReference type="PaxDb" id="9823-ENSSSCP00000013926"/>
<dbReference type="PeptideAtlas" id="P00791"/>
<dbReference type="Ensembl" id="ENSSSCT00000014312.3">
    <property type="protein sequence ID" value="ENSSSCP00000013926.1"/>
    <property type="gene ID" value="ENSSSCG00000013092.3"/>
</dbReference>
<dbReference type="Ensembl" id="ENSSSCT00015022688.1">
    <property type="protein sequence ID" value="ENSSSCP00015008841.1"/>
    <property type="gene ID" value="ENSSSCG00015017091.1"/>
</dbReference>
<dbReference type="Ensembl" id="ENSSSCT00025107631.1">
    <property type="protein sequence ID" value="ENSSSCP00025048575.1"/>
    <property type="gene ID" value="ENSSSCG00025077434.1"/>
</dbReference>
<dbReference type="Ensembl" id="ENSSSCT00030085988.1">
    <property type="protein sequence ID" value="ENSSSCP00030039649.1"/>
    <property type="gene ID" value="ENSSSCG00030061514.1"/>
</dbReference>
<dbReference type="Ensembl" id="ENSSSCT00035075724.1">
    <property type="protein sequence ID" value="ENSSSCP00035030866.1"/>
    <property type="gene ID" value="ENSSSCG00035056668.1"/>
</dbReference>
<dbReference type="Ensembl" id="ENSSSCT00040080009.1">
    <property type="protein sequence ID" value="ENSSSCP00040034607.1"/>
    <property type="gene ID" value="ENSSSCG00040058917.1"/>
</dbReference>
<dbReference type="Ensembl" id="ENSSSCT00050064505.1">
    <property type="protein sequence ID" value="ENSSSCP00050027794.1"/>
    <property type="gene ID" value="ENSSSCG00050047341.1"/>
</dbReference>
<dbReference type="Ensembl" id="ENSSSCT00060103137.1">
    <property type="protein sequence ID" value="ENSSSCP00060044987.1"/>
    <property type="gene ID" value="ENSSSCG00060075334.1"/>
</dbReference>
<dbReference type="Ensembl" id="ENSSSCT00065107886.1">
    <property type="protein sequence ID" value="ENSSSCP00065048135.1"/>
    <property type="gene ID" value="ENSSSCG00065077961.1"/>
</dbReference>
<dbReference type="Ensembl" id="ENSSSCT00105078659">
    <property type="protein sequence ID" value="ENSSSCP00105055705"/>
    <property type="gene ID" value="ENSSSCG00105041240"/>
</dbReference>
<dbReference type="eggNOG" id="KOG1339">
    <property type="taxonomic scope" value="Eukaryota"/>
</dbReference>
<dbReference type="GeneTree" id="ENSGT00940000155036"/>
<dbReference type="HOGENOM" id="CLU_013253_3_0_1"/>
<dbReference type="InParanoid" id="P00791"/>
<dbReference type="OMA" id="MGFWTID"/>
<dbReference type="TreeFam" id="TF314990"/>
<dbReference type="BRENDA" id="3.4.23.1">
    <property type="organism ID" value="6170"/>
</dbReference>
<dbReference type="Reactome" id="R-SSC-5683826">
    <property type="pathway name" value="Surfactant metabolism"/>
</dbReference>
<dbReference type="SABIO-RK" id="P00791"/>
<dbReference type="EvolutionaryTrace" id="P00791"/>
<dbReference type="Proteomes" id="UP000008227">
    <property type="component" value="Chromosome 2"/>
</dbReference>
<dbReference type="Proteomes" id="UP000314985">
    <property type="component" value="Unplaced"/>
</dbReference>
<dbReference type="Proteomes" id="UP000694570">
    <property type="component" value="Unplaced"/>
</dbReference>
<dbReference type="Proteomes" id="UP000694571">
    <property type="component" value="Unplaced"/>
</dbReference>
<dbReference type="Proteomes" id="UP000694720">
    <property type="component" value="Unplaced"/>
</dbReference>
<dbReference type="Proteomes" id="UP000694722">
    <property type="component" value="Unplaced"/>
</dbReference>
<dbReference type="Proteomes" id="UP000694723">
    <property type="component" value="Unplaced"/>
</dbReference>
<dbReference type="Proteomes" id="UP000694724">
    <property type="component" value="Unplaced"/>
</dbReference>
<dbReference type="Proteomes" id="UP000694725">
    <property type="component" value="Unplaced"/>
</dbReference>
<dbReference type="Proteomes" id="UP000694726">
    <property type="component" value="Unplaced"/>
</dbReference>
<dbReference type="Proteomes" id="UP000694727">
    <property type="component" value="Unplaced"/>
</dbReference>
<dbReference type="Proteomes" id="UP000694728">
    <property type="component" value="Unplaced"/>
</dbReference>
<dbReference type="Bgee" id="ENSSSCG00000013092">
    <property type="expression patterns" value="Expressed in duodenum and 8 other cell types or tissues"/>
</dbReference>
<dbReference type="GO" id="GO:0005576">
    <property type="term" value="C:extracellular region"/>
    <property type="evidence" value="ECO:0007669"/>
    <property type="project" value="UniProtKB-SubCell"/>
</dbReference>
<dbReference type="GO" id="GO:0004190">
    <property type="term" value="F:aspartic-type endopeptidase activity"/>
    <property type="evidence" value="ECO:0000318"/>
    <property type="project" value="GO_Central"/>
</dbReference>
<dbReference type="GO" id="GO:0007586">
    <property type="term" value="P:digestion"/>
    <property type="evidence" value="ECO:0007669"/>
    <property type="project" value="UniProtKB-KW"/>
</dbReference>
<dbReference type="GO" id="GO:0006508">
    <property type="term" value="P:proteolysis"/>
    <property type="evidence" value="ECO:0000318"/>
    <property type="project" value="GO_Central"/>
</dbReference>
<dbReference type="CDD" id="cd05478">
    <property type="entry name" value="pepsin_A"/>
    <property type="match status" value="1"/>
</dbReference>
<dbReference type="FunFam" id="2.40.70.10:FF:000006">
    <property type="entry name" value="Cathepsin E"/>
    <property type="match status" value="1"/>
</dbReference>
<dbReference type="FunFam" id="2.40.70.10:FF:000004">
    <property type="entry name" value="Pepsin A"/>
    <property type="match status" value="1"/>
</dbReference>
<dbReference type="Gene3D" id="6.10.140.60">
    <property type="match status" value="1"/>
</dbReference>
<dbReference type="Gene3D" id="2.40.70.10">
    <property type="entry name" value="Acid Proteases"/>
    <property type="match status" value="2"/>
</dbReference>
<dbReference type="InterPro" id="IPR001461">
    <property type="entry name" value="Aspartic_peptidase_A1"/>
</dbReference>
<dbReference type="InterPro" id="IPR001969">
    <property type="entry name" value="Aspartic_peptidase_AS"/>
</dbReference>
<dbReference type="InterPro" id="IPR012848">
    <property type="entry name" value="Aspartic_peptidase_N"/>
</dbReference>
<dbReference type="InterPro" id="IPR034162">
    <property type="entry name" value="Pepsin_A"/>
</dbReference>
<dbReference type="InterPro" id="IPR033121">
    <property type="entry name" value="PEPTIDASE_A1"/>
</dbReference>
<dbReference type="InterPro" id="IPR021109">
    <property type="entry name" value="Peptidase_aspartic_dom_sf"/>
</dbReference>
<dbReference type="PANTHER" id="PTHR47966">
    <property type="entry name" value="BETA-SITE APP-CLEAVING ENZYME, ISOFORM A-RELATED"/>
    <property type="match status" value="1"/>
</dbReference>
<dbReference type="PANTHER" id="PTHR47966:SF22">
    <property type="entry name" value="PEPSIN A-3-RELATED"/>
    <property type="match status" value="1"/>
</dbReference>
<dbReference type="Pfam" id="PF07966">
    <property type="entry name" value="A1_Propeptide"/>
    <property type="match status" value="1"/>
</dbReference>
<dbReference type="Pfam" id="PF00026">
    <property type="entry name" value="Asp"/>
    <property type="match status" value="1"/>
</dbReference>
<dbReference type="PRINTS" id="PR00792">
    <property type="entry name" value="PEPSIN"/>
</dbReference>
<dbReference type="SUPFAM" id="SSF50630">
    <property type="entry name" value="Acid proteases"/>
    <property type="match status" value="1"/>
</dbReference>
<dbReference type="PROSITE" id="PS00141">
    <property type="entry name" value="ASP_PROTEASE"/>
    <property type="match status" value="2"/>
</dbReference>
<dbReference type="PROSITE" id="PS51767">
    <property type="entry name" value="PEPTIDASE_A1"/>
    <property type="match status" value="1"/>
</dbReference>
<comment type="function">
    <text>Shows particularly broad specificity; although bonds involving phenylalanine and leucine are preferred, many others are also cleaved to some extent.</text>
</comment>
<comment type="catalytic activity">
    <reaction evidence="3">
        <text>Preferential cleavage: hydrophobic, preferably aromatic, residues in P1 and P1' positions. Cleaves 1-Phe-|-Val-2, 4-Gln-|-His-5, 13-Glu-|-Ala-14, 14-Ala-|-Leu-15, 15-Leu-|-Tyr-16, 16-Tyr-|-Leu-17, 23-Gly-|-Phe-24, 24-Phe-|-Phe-25 and 25-Phe-|-Tyr-26 bonds in the B chain of insulin.</text>
        <dbReference type="EC" id="3.4.23.1"/>
    </reaction>
</comment>
<comment type="subcellular location">
    <subcellularLocation>
        <location>Secreted</location>
    </subcellularLocation>
</comment>
<comment type="PTM">
    <text>Minor amounts of the active enzyme occur with 'Ala-58' at the amino end.</text>
</comment>
<comment type="similarity">
    <text evidence="11">Belongs to the peptidase A1 family.</text>
</comment>
<evidence type="ECO:0000250" key="1">
    <source>
        <dbReference type="UniProtKB" id="P03954"/>
    </source>
</evidence>
<evidence type="ECO:0000255" key="2">
    <source>
        <dbReference type="PROSITE-ProRule" id="PRU01103"/>
    </source>
</evidence>
<evidence type="ECO:0000255" key="3">
    <source>
        <dbReference type="PROSITE-ProRule" id="PRU10094"/>
    </source>
</evidence>
<evidence type="ECO:0000269" key="4">
    <source>
    </source>
</evidence>
<evidence type="ECO:0000269" key="5">
    <source>
    </source>
</evidence>
<evidence type="ECO:0000269" key="6">
    <source>
    </source>
</evidence>
<evidence type="ECO:0000269" key="7">
    <source>
    </source>
</evidence>
<evidence type="ECO:0000269" key="8">
    <source>
    </source>
</evidence>
<evidence type="ECO:0000269" key="9">
    <source>
    </source>
</evidence>
<evidence type="ECO:0000269" key="10">
    <source>
    </source>
</evidence>
<evidence type="ECO:0000305" key="11"/>
<evidence type="ECO:0007829" key="12">
    <source>
        <dbReference type="PDB" id="2PSG"/>
    </source>
</evidence>
<evidence type="ECO:0007829" key="13">
    <source>
        <dbReference type="PDB" id="3PSG"/>
    </source>
</evidence>
<evidence type="ECO:0007829" key="14">
    <source>
        <dbReference type="PDB" id="4PEP"/>
    </source>
</evidence>
<evidence type="ECO:0007829" key="15">
    <source>
        <dbReference type="PDB" id="6XCZ"/>
    </source>
</evidence>
<keyword id="KW-0002">3D-structure</keyword>
<keyword id="KW-0064">Aspartyl protease</keyword>
<keyword id="KW-0222">Digestion</keyword>
<keyword id="KW-0903">Direct protein sequencing</keyword>
<keyword id="KW-1015">Disulfide bond</keyword>
<keyword id="KW-0378">Hydrolase</keyword>
<keyword id="KW-0597">Phosphoprotein</keyword>
<keyword id="KW-0645">Protease</keyword>
<keyword id="KW-1185">Reference proteome</keyword>
<keyword id="KW-0964">Secreted</keyword>
<keyword id="KW-0732">Signal</keyword>
<keyword id="KW-0865">Zymogen</keyword>
<feature type="signal peptide" evidence="5 6 7 9">
    <location>
        <begin position="1"/>
        <end position="15"/>
    </location>
</feature>
<feature type="propeptide" id="PRO_0000026026" description="Activation peptide" evidence="5 8">
    <location>
        <begin position="16"/>
        <end position="59"/>
    </location>
</feature>
<feature type="chain" id="PRO_0000026027" description="Pepsin A">
    <location>
        <begin position="60"/>
        <end position="385"/>
    </location>
</feature>
<feature type="domain" description="Peptidase A1" evidence="2">
    <location>
        <begin position="73"/>
        <end position="382"/>
    </location>
</feature>
<feature type="active site" evidence="3 4 10">
    <location>
        <position position="91"/>
    </location>
</feature>
<feature type="active site" evidence="3 4 10">
    <location>
        <position position="274"/>
    </location>
</feature>
<feature type="modified residue" description="Phosphoserine" evidence="1">
    <location>
        <position position="127"/>
    </location>
</feature>
<feature type="disulfide bond" evidence="4 8">
    <location>
        <begin position="104"/>
        <end position="109"/>
    </location>
</feature>
<feature type="disulfide bond" evidence="4 8">
    <location>
        <begin position="265"/>
        <end position="269"/>
    </location>
</feature>
<feature type="disulfide bond" evidence="8">
    <location>
        <begin position="308"/>
        <end position="341"/>
    </location>
</feature>
<feature type="mutagenesis site" description="Loss of activity." evidence="5">
    <original>D</original>
    <variation>A</variation>
    <location>
        <position position="91"/>
    </location>
</feature>
<feature type="sequence conflict" description="In Ref. 4; AA sequence and 5; AA sequence." evidence="11" ref="4 5">
    <original>N</original>
    <variation>D</variation>
    <location>
        <position position="34"/>
    </location>
</feature>
<feature type="sequence conflict" description="In Ref. 3; AA sequence." evidence="11" ref="3">
    <original>DS</original>
    <variation>SD</variation>
    <location>
        <begin position="119"/>
        <end position="120"/>
    </location>
</feature>
<feature type="sequence conflict" description="In Ref. 3; AA sequence." evidence="11" ref="3">
    <original>Q</original>
    <variation>E</variation>
    <location>
        <position position="128"/>
    </location>
</feature>
<feature type="sequence conflict" description="In Ref. 1; AAA31095." evidence="11" ref="1">
    <original>A</original>
    <variation>AI</variation>
    <location>
        <position position="288"/>
    </location>
</feature>
<feature type="sequence conflict" description="In Ref. 2; AAA31096." evidence="11" ref="2">
    <original>D</original>
    <variation>Y</variation>
    <location>
        <position position="301"/>
    </location>
</feature>
<feature type="sequence conflict" description="In Ref. 6; AA sequence." evidence="11" ref="6">
    <original>S</original>
    <variation>Q</variation>
    <location>
        <position position="313"/>
    </location>
</feature>
<feature type="sequence conflict" description="In Ref. 6; AA sequence." evidence="11" ref="6">
    <original>N</original>
    <variation>D</variation>
    <location>
        <position position="322"/>
    </location>
</feature>
<feature type="strand" evidence="13">
    <location>
        <begin position="17"/>
        <end position="23"/>
    </location>
</feature>
<feature type="helix" evidence="13">
    <location>
        <begin position="27"/>
        <end position="33"/>
    </location>
</feature>
<feature type="helix" evidence="13">
    <location>
        <begin position="37"/>
        <end position="43"/>
    </location>
</feature>
<feature type="helix" evidence="13">
    <location>
        <begin position="48"/>
        <end position="51"/>
    </location>
</feature>
<feature type="helix" evidence="12">
    <location>
        <begin position="54"/>
        <end position="56"/>
    </location>
</feature>
<feature type="strand" evidence="15">
    <location>
        <begin position="61"/>
        <end position="64"/>
    </location>
</feature>
<feature type="helix" evidence="13">
    <location>
        <begin position="66"/>
        <end position="68"/>
    </location>
</feature>
<feature type="turn" evidence="14">
    <location>
        <begin position="69"/>
        <end position="71"/>
    </location>
</feature>
<feature type="strand" evidence="13">
    <location>
        <begin position="73"/>
        <end position="79"/>
    </location>
</feature>
<feature type="turn" evidence="13">
    <location>
        <begin position="80"/>
        <end position="83"/>
    </location>
</feature>
<feature type="strand" evidence="13">
    <location>
        <begin position="84"/>
        <end position="91"/>
    </location>
</feature>
<feature type="strand" evidence="13">
    <location>
        <begin position="97"/>
        <end position="101"/>
    </location>
</feature>
<feature type="helix" evidence="13">
    <location>
        <begin position="107"/>
        <end position="109"/>
    </location>
</feature>
<feature type="helix" evidence="13">
    <location>
        <begin position="117"/>
        <end position="119"/>
    </location>
</feature>
<feature type="strand" evidence="13">
    <location>
        <begin position="124"/>
        <end position="136"/>
    </location>
</feature>
<feature type="strand" evidence="13">
    <location>
        <begin position="138"/>
        <end position="150"/>
    </location>
</feature>
<feature type="strand" evidence="13">
    <location>
        <begin position="153"/>
        <end position="163"/>
    </location>
</feature>
<feature type="helix" evidence="13">
    <location>
        <begin position="169"/>
        <end position="173"/>
    </location>
</feature>
<feature type="strand" evidence="13">
    <location>
        <begin position="177"/>
        <end position="181"/>
    </location>
</feature>
<feature type="helix" evidence="13">
    <location>
        <begin position="185"/>
        <end position="187"/>
    </location>
</feature>
<feature type="helix" evidence="13">
    <location>
        <begin position="189"/>
        <end position="191"/>
    </location>
</feature>
<feature type="helix" evidence="13">
    <location>
        <begin position="195"/>
        <end position="201"/>
    </location>
</feature>
<feature type="strand" evidence="13">
    <location>
        <begin position="205"/>
        <end position="214"/>
    </location>
</feature>
<feature type="strand" evidence="12">
    <location>
        <begin position="216"/>
        <end position="218"/>
    </location>
</feature>
<feature type="strand" evidence="13">
    <location>
        <begin position="222"/>
        <end position="226"/>
    </location>
</feature>
<feature type="helix" evidence="13">
    <location>
        <begin position="231"/>
        <end position="233"/>
    </location>
</feature>
<feature type="strand" evidence="13">
    <location>
        <begin position="234"/>
        <end position="236"/>
    </location>
</feature>
<feature type="strand" evidence="13">
    <location>
        <begin position="239"/>
        <end position="242"/>
    </location>
</feature>
<feature type="turn" evidence="13">
    <location>
        <begin position="246"/>
        <end position="249"/>
    </location>
</feature>
<feature type="strand" evidence="13">
    <location>
        <begin position="250"/>
        <end position="253"/>
    </location>
</feature>
<feature type="strand" evidence="13">
    <location>
        <begin position="255"/>
        <end position="264"/>
    </location>
</feature>
<feature type="strand" evidence="13">
    <location>
        <begin position="269"/>
        <end position="273"/>
    </location>
</feature>
<feature type="strand" evidence="13">
    <location>
        <begin position="279"/>
        <end position="283"/>
    </location>
</feature>
<feature type="helix" evidence="13">
    <location>
        <begin position="284"/>
        <end position="293"/>
    </location>
</feature>
<feature type="strand" evidence="12">
    <location>
        <begin position="300"/>
        <end position="302"/>
    </location>
</feature>
<feature type="strand" evidence="12">
    <location>
        <begin position="304"/>
        <end position="306"/>
    </location>
</feature>
<feature type="helix" evidence="13">
    <location>
        <begin position="308"/>
        <end position="313"/>
    </location>
</feature>
<feature type="strand" evidence="13">
    <location>
        <begin position="317"/>
        <end position="321"/>
    </location>
</feature>
<feature type="strand" evidence="13">
    <location>
        <begin position="324"/>
        <end position="328"/>
    </location>
</feature>
<feature type="helix" evidence="13">
    <location>
        <begin position="330"/>
        <end position="333"/>
    </location>
</feature>
<feature type="strand" evidence="13">
    <location>
        <begin position="334"/>
        <end position="336"/>
    </location>
</feature>
<feature type="strand" evidence="13">
    <location>
        <begin position="341"/>
        <end position="348"/>
    </location>
</feature>
<feature type="strand" evidence="12">
    <location>
        <begin position="352"/>
        <end position="354"/>
    </location>
</feature>
<feature type="strand" evidence="13">
    <location>
        <begin position="357"/>
        <end position="360"/>
    </location>
</feature>
<feature type="helix" evidence="13">
    <location>
        <begin position="362"/>
        <end position="365"/>
    </location>
</feature>
<feature type="strand" evidence="13">
    <location>
        <begin position="368"/>
        <end position="373"/>
    </location>
</feature>
<feature type="turn" evidence="13">
    <location>
        <begin position="374"/>
        <end position="377"/>
    </location>
</feature>
<feature type="strand" evidence="13">
    <location>
        <begin position="378"/>
        <end position="384"/>
    </location>
</feature>
<sequence>MKWLLLLSLVVLSECLVKVPLVRKKSLRQNLIKNGKLKDFLKTHKHNPASKYFPEAAALIGDEPLENYLDTEYFGTIGIGTPAQDFTVIFDTGSSNLWVPSVYCSSLACSDHNQFNPDDSSTFEATSQELSITYGTGSMTGILGYDTVQVGGISDTNQIFGLSETEPGSFLYYAPFDGILGLAYPSISASGATPVFDNLWDQGLVSQDLFSVYLSSNDDSGSVVLLGGIDSSYYTGSLNWVPVSVEGYWQITLDSITMDGETIACSGGCQAIVDTGTSLLTGPTSAIANIQSDIGASENSDGEMVISCSSIDSLPDIVFTINGVQYPLSPSAYILQDDDSCTSGFEGMDVPTSSGELWILGDVFIRQYYTVFDRANNKVGLAPVA</sequence>